<proteinExistence type="evidence at protein level"/>
<dbReference type="EC" id="3.4.13.-"/>
<dbReference type="EMBL" id="Y14816">
    <property type="protein sequence ID" value="CAB82474.1"/>
    <property type="molecule type" value="Genomic_DNA"/>
</dbReference>
<dbReference type="EMBL" id="CP000046">
    <property type="protein sequence ID" value="AAW38329.1"/>
    <property type="molecule type" value="Genomic_DNA"/>
</dbReference>
<dbReference type="PDB" id="3KHX">
    <property type="method" value="X-ray"/>
    <property type="resolution" value="2.30 A"/>
    <property type="chains" value="A/B=1-469"/>
</dbReference>
<dbReference type="PDB" id="3KHZ">
    <property type="method" value="X-ray"/>
    <property type="resolution" value="2.50 A"/>
    <property type="chains" value="A/B=1-469"/>
</dbReference>
<dbReference type="PDB" id="3KI9">
    <property type="method" value="X-ray"/>
    <property type="resolution" value="2.90 A"/>
    <property type="chains" value="A=1-469"/>
</dbReference>
<dbReference type="PDBsum" id="3KHX"/>
<dbReference type="PDBsum" id="3KHZ"/>
<dbReference type="PDBsum" id="3KI9"/>
<dbReference type="SMR" id="Q5HF23"/>
<dbReference type="KEGG" id="sac:SACOL1801"/>
<dbReference type="HOGENOM" id="CLU_031786_2_0_9"/>
<dbReference type="EvolutionaryTrace" id="Q5HF23"/>
<dbReference type="Proteomes" id="UP000000530">
    <property type="component" value="Chromosome"/>
</dbReference>
<dbReference type="GO" id="GO:0008777">
    <property type="term" value="F:acetylornithine deacetylase activity"/>
    <property type="evidence" value="ECO:0007669"/>
    <property type="project" value="TreeGrafter"/>
</dbReference>
<dbReference type="GO" id="GO:0016805">
    <property type="term" value="F:dipeptidase activity"/>
    <property type="evidence" value="ECO:0007669"/>
    <property type="project" value="UniProtKB-KW"/>
</dbReference>
<dbReference type="GO" id="GO:0008237">
    <property type="term" value="F:metallopeptidase activity"/>
    <property type="evidence" value="ECO:0007669"/>
    <property type="project" value="UniProtKB-KW"/>
</dbReference>
<dbReference type="GO" id="GO:0008270">
    <property type="term" value="F:zinc ion binding"/>
    <property type="evidence" value="ECO:0007669"/>
    <property type="project" value="InterPro"/>
</dbReference>
<dbReference type="GO" id="GO:0006526">
    <property type="term" value="P:L-arginine biosynthetic process"/>
    <property type="evidence" value="ECO:0007669"/>
    <property type="project" value="TreeGrafter"/>
</dbReference>
<dbReference type="GO" id="GO:0006508">
    <property type="term" value="P:proteolysis"/>
    <property type="evidence" value="ECO:0007669"/>
    <property type="project" value="UniProtKB-KW"/>
</dbReference>
<dbReference type="CDD" id="cd03888">
    <property type="entry name" value="M20_PepV"/>
    <property type="match status" value="1"/>
</dbReference>
<dbReference type="Gene3D" id="3.30.70.360">
    <property type="match status" value="2"/>
</dbReference>
<dbReference type="Gene3D" id="3.40.630.10">
    <property type="entry name" value="Zn peptidases"/>
    <property type="match status" value="1"/>
</dbReference>
<dbReference type="InterPro" id="IPR036264">
    <property type="entry name" value="Bact_exopeptidase_dim_dom"/>
</dbReference>
<dbReference type="InterPro" id="IPR010964">
    <property type="entry name" value="M20A_pepV-rel"/>
</dbReference>
<dbReference type="InterPro" id="IPR002933">
    <property type="entry name" value="Peptidase_M20"/>
</dbReference>
<dbReference type="InterPro" id="IPR050072">
    <property type="entry name" value="Peptidase_M20A"/>
</dbReference>
<dbReference type="NCBIfam" id="TIGR01887">
    <property type="entry name" value="dipeptidaselike"/>
    <property type="match status" value="1"/>
</dbReference>
<dbReference type="NCBIfam" id="NF005591">
    <property type="entry name" value="PRK07318.1"/>
    <property type="match status" value="1"/>
</dbReference>
<dbReference type="PANTHER" id="PTHR43808">
    <property type="entry name" value="ACETYLORNITHINE DEACETYLASE"/>
    <property type="match status" value="1"/>
</dbReference>
<dbReference type="PANTHER" id="PTHR43808:SF31">
    <property type="entry name" value="N-ACETYL-L-CITRULLINE DEACETYLASE"/>
    <property type="match status" value="1"/>
</dbReference>
<dbReference type="Pfam" id="PF01546">
    <property type="entry name" value="Peptidase_M20"/>
    <property type="match status" value="1"/>
</dbReference>
<dbReference type="SUPFAM" id="SSF55031">
    <property type="entry name" value="Bacterial exopeptidase dimerisation domain"/>
    <property type="match status" value="1"/>
</dbReference>
<dbReference type="SUPFAM" id="SSF53187">
    <property type="entry name" value="Zn-dependent exopeptidases"/>
    <property type="match status" value="1"/>
</dbReference>
<keyword id="KW-0002">3D-structure</keyword>
<keyword id="KW-0224">Dipeptidase</keyword>
<keyword id="KW-0378">Hydrolase</keyword>
<keyword id="KW-0479">Metal-binding</keyword>
<keyword id="KW-0482">Metalloprotease</keyword>
<keyword id="KW-0645">Protease</keyword>
<keyword id="KW-0862">Zinc</keyword>
<comment type="cofactor">
    <cofactor evidence="1">
        <name>Zn(2+)</name>
        <dbReference type="ChEBI" id="CHEBI:29105"/>
    </cofactor>
    <text evidence="1">Binds 2 Zn(2+) ions per subunit.</text>
</comment>
<comment type="similarity">
    <text evidence="2">Belongs to the peptidase M20A family.</text>
</comment>
<feature type="chain" id="PRO_0000282625" description="Putative dipeptidase SACOL1801">
    <location>
        <begin position="1"/>
        <end position="469"/>
    </location>
</feature>
<feature type="active site" evidence="1">
    <location>
        <position position="86"/>
    </location>
</feature>
<feature type="active site" description="Proton acceptor" evidence="1">
    <location>
        <position position="149"/>
    </location>
</feature>
<feature type="binding site" evidence="1">
    <location>
        <position position="84"/>
    </location>
    <ligand>
        <name>Zn(2+)</name>
        <dbReference type="ChEBI" id="CHEBI:29105"/>
        <label>2</label>
    </ligand>
</feature>
<feature type="binding site" evidence="1">
    <location>
        <position position="115"/>
    </location>
    <ligand>
        <name>Zn(2+)</name>
        <dbReference type="ChEBI" id="CHEBI:29105"/>
        <label>1</label>
    </ligand>
</feature>
<feature type="binding site" evidence="1">
    <location>
        <position position="115"/>
    </location>
    <ligand>
        <name>Zn(2+)</name>
        <dbReference type="ChEBI" id="CHEBI:29105"/>
        <label>2</label>
    </ligand>
</feature>
<feature type="binding site" evidence="1">
    <location>
        <position position="150"/>
    </location>
    <ligand>
        <name>Zn(2+)</name>
        <dbReference type="ChEBI" id="CHEBI:29105"/>
        <label>1</label>
    </ligand>
</feature>
<feature type="binding site" evidence="1">
    <location>
        <position position="173"/>
    </location>
    <ligand>
        <name>Zn(2+)</name>
        <dbReference type="ChEBI" id="CHEBI:29105"/>
        <label>2</label>
    </ligand>
</feature>
<feature type="binding site" evidence="1">
    <location>
        <position position="440"/>
    </location>
    <ligand>
        <name>Zn(2+)</name>
        <dbReference type="ChEBI" id="CHEBI:29105"/>
        <label>1</label>
    </ligand>
</feature>
<feature type="helix" evidence="3">
    <location>
        <begin position="3"/>
        <end position="7"/>
    </location>
</feature>
<feature type="helix" evidence="3">
    <location>
        <begin position="10"/>
        <end position="21"/>
    </location>
</feature>
<feature type="strand" evidence="3">
    <location>
        <begin position="29"/>
        <end position="31"/>
    </location>
</feature>
<feature type="strand" evidence="3">
    <location>
        <begin position="34"/>
        <end position="36"/>
    </location>
</feature>
<feature type="helix" evidence="3">
    <location>
        <begin position="40"/>
        <end position="55"/>
    </location>
</feature>
<feature type="strand" evidence="3">
    <location>
        <begin position="59"/>
        <end position="63"/>
    </location>
</feature>
<feature type="turn" evidence="3">
    <location>
        <begin position="64"/>
        <end position="66"/>
    </location>
</feature>
<feature type="strand" evidence="3">
    <location>
        <begin position="67"/>
        <end position="73"/>
    </location>
</feature>
<feature type="strand" evidence="3">
    <location>
        <begin position="78"/>
        <end position="84"/>
    </location>
</feature>
<feature type="strand" evidence="3">
    <location>
        <begin position="105"/>
        <end position="110"/>
    </location>
</feature>
<feature type="turn" evidence="3">
    <location>
        <begin position="111"/>
        <end position="116"/>
    </location>
</feature>
<feature type="helix" evidence="3">
    <location>
        <begin position="117"/>
        <end position="132"/>
    </location>
</feature>
<feature type="strand" evidence="3">
    <location>
        <begin position="138"/>
        <end position="146"/>
    </location>
</feature>
<feature type="turn" evidence="5">
    <location>
        <begin position="149"/>
        <end position="151"/>
    </location>
</feature>
<feature type="helix" evidence="3">
    <location>
        <begin position="158"/>
        <end position="162"/>
    </location>
</feature>
<feature type="strand" evidence="3">
    <location>
        <begin position="167"/>
        <end position="170"/>
    </location>
</feature>
<feature type="strand" evidence="5">
    <location>
        <begin position="179"/>
        <end position="182"/>
    </location>
</feature>
<feature type="strand" evidence="3">
    <location>
        <begin position="184"/>
        <end position="192"/>
    </location>
</feature>
<feature type="strand" evidence="3">
    <location>
        <begin position="203"/>
        <end position="211"/>
    </location>
</feature>
<feature type="strand" evidence="4">
    <location>
        <begin position="214"/>
        <end position="217"/>
    </location>
</feature>
<feature type="strand" evidence="3">
    <location>
        <begin position="221"/>
        <end position="228"/>
    </location>
</feature>
<feature type="helix" evidence="3">
    <location>
        <begin position="232"/>
        <end position="245"/>
    </location>
</feature>
<feature type="strand" evidence="3">
    <location>
        <begin position="249"/>
        <end position="255"/>
    </location>
</feature>
<feature type="strand" evidence="3">
    <location>
        <begin position="258"/>
        <end position="264"/>
    </location>
</feature>
<feature type="helix" evidence="3">
    <location>
        <begin position="273"/>
        <end position="275"/>
    </location>
</feature>
<feature type="helix" evidence="3">
    <location>
        <begin position="279"/>
        <end position="287"/>
    </location>
</feature>
<feature type="helix" evidence="3">
    <location>
        <begin position="294"/>
        <end position="306"/>
    </location>
</feature>
<feature type="turn" evidence="3">
    <location>
        <begin position="307"/>
        <end position="309"/>
    </location>
</feature>
<feature type="helix" evidence="3">
    <location>
        <begin position="314"/>
        <end position="316"/>
    </location>
</feature>
<feature type="turn" evidence="4">
    <location>
        <begin position="323"/>
        <end position="325"/>
    </location>
</feature>
<feature type="strand" evidence="3">
    <location>
        <begin position="329"/>
        <end position="338"/>
    </location>
</feature>
<feature type="turn" evidence="3">
    <location>
        <begin position="339"/>
        <end position="341"/>
    </location>
</feature>
<feature type="strand" evidence="3">
    <location>
        <begin position="344"/>
        <end position="351"/>
    </location>
</feature>
<feature type="helix" evidence="3">
    <location>
        <begin position="357"/>
        <end position="368"/>
    </location>
</feature>
<feature type="helix" evidence="3">
    <location>
        <begin position="369"/>
        <end position="371"/>
    </location>
</feature>
<feature type="strand" evidence="3">
    <location>
        <begin position="373"/>
        <end position="381"/>
    </location>
</feature>
<feature type="helix" evidence="3">
    <location>
        <begin position="387"/>
        <end position="389"/>
    </location>
</feature>
<feature type="helix" evidence="3">
    <location>
        <begin position="391"/>
        <end position="401"/>
    </location>
</feature>
<feature type="strand" evidence="5">
    <location>
        <begin position="411"/>
        <end position="413"/>
    </location>
</feature>
<feature type="helix" evidence="5">
    <location>
        <begin position="419"/>
        <end position="421"/>
    </location>
</feature>
<feature type="strand" evidence="3">
    <location>
        <begin position="445"/>
        <end position="447"/>
    </location>
</feature>
<feature type="helix" evidence="3">
    <location>
        <begin position="448"/>
        <end position="466"/>
    </location>
</feature>
<organism>
    <name type="scientific">Staphylococcus aureus (strain COL)</name>
    <dbReference type="NCBI Taxonomy" id="93062"/>
    <lineage>
        <taxon>Bacteria</taxon>
        <taxon>Bacillati</taxon>
        <taxon>Bacillota</taxon>
        <taxon>Bacilli</taxon>
        <taxon>Bacillales</taxon>
        <taxon>Staphylococcaceae</taxon>
        <taxon>Staphylococcus</taxon>
    </lineage>
</organism>
<accession>Q5HF23</accession>
<accession>Q9KWZ7</accession>
<protein>
    <recommendedName>
        <fullName>Putative dipeptidase SACOL1801</fullName>
        <ecNumber>3.4.13.-</ecNumber>
    </recommendedName>
</protein>
<name>PEPVL_STAAC</name>
<evidence type="ECO:0000250" key="1"/>
<evidence type="ECO:0000305" key="2"/>
<evidence type="ECO:0007829" key="3">
    <source>
        <dbReference type="PDB" id="3KHX"/>
    </source>
</evidence>
<evidence type="ECO:0007829" key="4">
    <source>
        <dbReference type="PDB" id="3KHZ"/>
    </source>
</evidence>
<evidence type="ECO:0007829" key="5">
    <source>
        <dbReference type="PDB" id="3KI9"/>
    </source>
</evidence>
<gene>
    <name type="ordered locus">SACOL1801</name>
</gene>
<sequence>MWKEKVQQYEDQIINDLKGLLAIESVRDDAKASEDAPVGPGPRKALDYMYEIAHRDGFTTHDVDHIAGRIEAGKGNDVLGILCHVDVVPAGDGWDSNPFEPVVTEDAIIARGTLDDKGPTIAAYYAIKILEDMNVDWKKRIHMIIGTDEESDWKCTDRYFKTEEMPTLGFAPDAEFPCIHGEKGITTFDLVQNKLTEDQDEPDYELITFKSGERYNMVPDHAEARVLVKENMTDVIQDFEYFLEQNHLQGDSTVDSGILVLTVEGKAVHGMDPSIGVNAGLYLLKFLASLNLDNNAQAFVAFSNRYLFNSDFGEKMGMKFHTDVMGDVTTNIGVITYDNENAGLFGINLRYPEGFEFEKAMDRFANEIQQYGFEVKLGKVQPPHYVDKNDPFVQKLVTAYRNQTNDMTEPYTIGGGTYARNLDKGVAFGAMFSDSEDLMHQKNEYITKKQLFNATSIYLEAIYSLCVEE</sequence>
<reference key="1">
    <citation type="journal article" date="1999" name="Microb. Drug Resist.">
        <title>Antibiotic resistance as a stress response: complete sequencing of a large number of chromosomal loci in Staphylococcus aureus strain COL that impact on the expression of resistance to methicillin.</title>
        <authorList>
            <person name="de Lencastre H."/>
            <person name="Wu S.-W."/>
            <person name="Pinho M.G."/>
            <person name="Ludovice A.M."/>
            <person name="Filipe S."/>
            <person name="Gardete S."/>
            <person name="Sobral R."/>
            <person name="Gill S.R."/>
            <person name="Chung M."/>
            <person name="Tomasz A."/>
        </authorList>
    </citation>
    <scope>NUCLEOTIDE SEQUENCE [GENOMIC DNA]</scope>
</reference>
<reference key="2">
    <citation type="journal article" date="2005" name="J. Bacteriol.">
        <title>Insights on evolution of virulence and resistance from the complete genome analysis of an early methicillin-resistant Staphylococcus aureus strain and a biofilm-producing methicillin-resistant Staphylococcus epidermidis strain.</title>
        <authorList>
            <person name="Gill S.R."/>
            <person name="Fouts D.E."/>
            <person name="Archer G.L."/>
            <person name="Mongodin E.F."/>
            <person name="DeBoy R.T."/>
            <person name="Ravel J."/>
            <person name="Paulsen I.T."/>
            <person name="Kolonay J.F."/>
            <person name="Brinkac L.M."/>
            <person name="Beanan M.J."/>
            <person name="Dodson R.J."/>
            <person name="Daugherty S.C."/>
            <person name="Madupu R."/>
            <person name="Angiuoli S.V."/>
            <person name="Durkin A.S."/>
            <person name="Haft D.H."/>
            <person name="Vamathevan J.J."/>
            <person name="Khouri H."/>
            <person name="Utterback T.R."/>
            <person name="Lee C."/>
            <person name="Dimitrov G."/>
            <person name="Jiang L."/>
            <person name="Qin H."/>
            <person name="Weidman J."/>
            <person name="Tran K."/>
            <person name="Kang K.H."/>
            <person name="Hance I.R."/>
            <person name="Nelson K.E."/>
            <person name="Fraser C.M."/>
        </authorList>
    </citation>
    <scope>NUCLEOTIDE SEQUENCE [LARGE SCALE GENOMIC DNA]</scope>
    <source>
        <strain>COL</strain>
    </source>
</reference>